<comment type="function">
    <text evidence="1">Forms oxaloacetate, a four-carbon dicarboxylic acid source for the tricarboxylic acid cycle.</text>
</comment>
<comment type="catalytic activity">
    <reaction evidence="1">
        <text>oxaloacetate + phosphate = phosphoenolpyruvate + hydrogencarbonate</text>
        <dbReference type="Rhea" id="RHEA:28370"/>
        <dbReference type="ChEBI" id="CHEBI:16452"/>
        <dbReference type="ChEBI" id="CHEBI:17544"/>
        <dbReference type="ChEBI" id="CHEBI:43474"/>
        <dbReference type="ChEBI" id="CHEBI:58702"/>
        <dbReference type="EC" id="4.1.1.31"/>
    </reaction>
</comment>
<comment type="cofactor">
    <cofactor evidence="1">
        <name>Mg(2+)</name>
        <dbReference type="ChEBI" id="CHEBI:18420"/>
    </cofactor>
</comment>
<comment type="similarity">
    <text evidence="1">Belongs to the PEPCase type 1 family.</text>
</comment>
<keyword id="KW-0120">Carbon dioxide fixation</keyword>
<keyword id="KW-0456">Lyase</keyword>
<keyword id="KW-0460">Magnesium</keyword>
<gene>
    <name evidence="1" type="primary">ppc</name>
    <name type="ordered locus">YpsIP31758_0125</name>
</gene>
<evidence type="ECO:0000255" key="1">
    <source>
        <dbReference type="HAMAP-Rule" id="MF_00595"/>
    </source>
</evidence>
<name>CAPP_YERP3</name>
<organism>
    <name type="scientific">Yersinia pseudotuberculosis serotype O:1b (strain IP 31758)</name>
    <dbReference type="NCBI Taxonomy" id="349747"/>
    <lineage>
        <taxon>Bacteria</taxon>
        <taxon>Pseudomonadati</taxon>
        <taxon>Pseudomonadota</taxon>
        <taxon>Gammaproteobacteria</taxon>
        <taxon>Enterobacterales</taxon>
        <taxon>Yersiniaceae</taxon>
        <taxon>Yersinia</taxon>
    </lineage>
</organism>
<reference key="1">
    <citation type="journal article" date="2007" name="PLoS Genet.">
        <title>The complete genome sequence of Yersinia pseudotuberculosis IP31758, the causative agent of Far East scarlet-like fever.</title>
        <authorList>
            <person name="Eppinger M."/>
            <person name="Rosovitz M.J."/>
            <person name="Fricke W.F."/>
            <person name="Rasko D.A."/>
            <person name="Kokorina G."/>
            <person name="Fayolle C."/>
            <person name="Lindler L.E."/>
            <person name="Carniel E."/>
            <person name="Ravel J."/>
        </authorList>
    </citation>
    <scope>NUCLEOTIDE SEQUENCE [LARGE SCALE GENOMIC DNA]</scope>
    <source>
        <strain>IP 31758</strain>
    </source>
</reference>
<dbReference type="EC" id="4.1.1.31" evidence="1"/>
<dbReference type="EMBL" id="CP000720">
    <property type="protein sequence ID" value="ABS47428.1"/>
    <property type="molecule type" value="Genomic_DNA"/>
</dbReference>
<dbReference type="RefSeq" id="WP_011191467.1">
    <property type="nucleotide sequence ID" value="NC_009708.1"/>
</dbReference>
<dbReference type="SMR" id="A7FCZ7"/>
<dbReference type="GeneID" id="49787921"/>
<dbReference type="KEGG" id="ypi:YpsIP31758_0125"/>
<dbReference type="HOGENOM" id="CLU_006557_2_0_6"/>
<dbReference type="Proteomes" id="UP000002412">
    <property type="component" value="Chromosome"/>
</dbReference>
<dbReference type="GO" id="GO:0005829">
    <property type="term" value="C:cytosol"/>
    <property type="evidence" value="ECO:0007669"/>
    <property type="project" value="TreeGrafter"/>
</dbReference>
<dbReference type="GO" id="GO:0000287">
    <property type="term" value="F:magnesium ion binding"/>
    <property type="evidence" value="ECO:0007669"/>
    <property type="project" value="UniProtKB-UniRule"/>
</dbReference>
<dbReference type="GO" id="GO:0008964">
    <property type="term" value="F:phosphoenolpyruvate carboxylase activity"/>
    <property type="evidence" value="ECO:0007669"/>
    <property type="project" value="UniProtKB-UniRule"/>
</dbReference>
<dbReference type="GO" id="GO:0015977">
    <property type="term" value="P:carbon fixation"/>
    <property type="evidence" value="ECO:0007669"/>
    <property type="project" value="UniProtKB-UniRule"/>
</dbReference>
<dbReference type="GO" id="GO:0006107">
    <property type="term" value="P:oxaloacetate metabolic process"/>
    <property type="evidence" value="ECO:0007669"/>
    <property type="project" value="UniProtKB-UniRule"/>
</dbReference>
<dbReference type="GO" id="GO:0006099">
    <property type="term" value="P:tricarboxylic acid cycle"/>
    <property type="evidence" value="ECO:0007669"/>
    <property type="project" value="InterPro"/>
</dbReference>
<dbReference type="FunFam" id="1.20.1440.90:FF:000002">
    <property type="entry name" value="Phosphoenolpyruvate carboxylase"/>
    <property type="match status" value="1"/>
</dbReference>
<dbReference type="Gene3D" id="1.20.1440.90">
    <property type="entry name" value="Phosphoenolpyruvate/pyruvate domain"/>
    <property type="match status" value="1"/>
</dbReference>
<dbReference type="HAMAP" id="MF_00595">
    <property type="entry name" value="PEPcase_type1"/>
    <property type="match status" value="1"/>
</dbReference>
<dbReference type="InterPro" id="IPR021135">
    <property type="entry name" value="PEP_COase"/>
</dbReference>
<dbReference type="InterPro" id="IPR022805">
    <property type="entry name" value="PEP_COase_bac/pln-type"/>
</dbReference>
<dbReference type="InterPro" id="IPR018129">
    <property type="entry name" value="PEP_COase_Lys_AS"/>
</dbReference>
<dbReference type="InterPro" id="IPR033129">
    <property type="entry name" value="PEPCASE_His_AS"/>
</dbReference>
<dbReference type="InterPro" id="IPR015813">
    <property type="entry name" value="Pyrv/PenolPyrv_kinase-like_dom"/>
</dbReference>
<dbReference type="NCBIfam" id="NF000584">
    <property type="entry name" value="PRK00009.1"/>
    <property type="match status" value="1"/>
</dbReference>
<dbReference type="PANTHER" id="PTHR30523">
    <property type="entry name" value="PHOSPHOENOLPYRUVATE CARBOXYLASE"/>
    <property type="match status" value="1"/>
</dbReference>
<dbReference type="PANTHER" id="PTHR30523:SF6">
    <property type="entry name" value="PHOSPHOENOLPYRUVATE CARBOXYLASE"/>
    <property type="match status" value="1"/>
</dbReference>
<dbReference type="Pfam" id="PF00311">
    <property type="entry name" value="PEPcase"/>
    <property type="match status" value="1"/>
</dbReference>
<dbReference type="PRINTS" id="PR00150">
    <property type="entry name" value="PEPCARBXLASE"/>
</dbReference>
<dbReference type="SUPFAM" id="SSF51621">
    <property type="entry name" value="Phosphoenolpyruvate/pyruvate domain"/>
    <property type="match status" value="1"/>
</dbReference>
<dbReference type="PROSITE" id="PS00781">
    <property type="entry name" value="PEPCASE_1"/>
    <property type="match status" value="1"/>
</dbReference>
<dbReference type="PROSITE" id="PS00393">
    <property type="entry name" value="PEPCASE_2"/>
    <property type="match status" value="1"/>
</dbReference>
<accession>A7FCZ7</accession>
<protein>
    <recommendedName>
        <fullName evidence="1">Phosphoenolpyruvate carboxylase</fullName>
        <shortName evidence="1">PEPC</shortName>
        <shortName evidence="1">PEPCase</shortName>
        <ecNumber evidence="1">4.1.1.31</ecNumber>
    </recommendedName>
</protein>
<sequence length="878" mass="98352">MNEQYSAMRSNVSMLGTLLGDTIKEALGEHILDRVETIRKLSKSSRAGNEASRQELLTTLQNLSNDELLPVARAFSQFLNLTNTAEQYHSISPHGEAASNPEALAQLFTRLKDKKLSDQDMRSAVDDLSIELVLTAHPTEITRRTLIHKLVEVNTCLSQLDHNDLADYERNKIMRRLRQLVAQSWHTDEIRKLRPSPVDEAKWGFAVVENSLWEGVPAFLREFNEQLENSLDYRLPVEAVPIRFTSWMGGDRDGNPNVTAEITRHVLLLSRWKATDLFLRDIQVLVSELSMSECTPELRELAGGEEVLEPYRQLMKNVRTQLTNTQAYLEARLKGERVLPPHDLLVSNDQLWEPLYACYQSLKACGMEIIANGQLLDTLRRVRCFGVPLVRIDVRQESTRHTDAIAELTRYLGLGDYESWSESDKQAFLVRELNSKRPLVPLKWEPSAETQEVLETCRVIAEAPQGSIAAYVISMAKVPSDVLAVHLLLKEAGCPFTLPVAPLFETLDDLNNADDVMTQLLGIDWYRGLIQGKQMVMIGYSDSAKDAGVMAASWAQYRAQDALIKTCEKAGITLTLFHGRGGSIGRGGAPAHAALLSQPPGSLKGGLRVTEQGEMIRFKFGLPEVTISSLALYAGAILEANLLPPPEPKKEWIEVMDLLSDASCDMYRSYVRENPEFVRYFRAATPELELGKLPLGSRPAKRRPDGGVESLRAIPWIFAWTQNRLMLPAWLGAGAGLQRAIDAGKRDVLATMCRDWPFFSTRIGMLEMVFAKADLWLAEYYDQRLVDKSLWPLGQQLRDQLAADIKVVLAIANDDHLMADLPWIAESIALRNVYTDPLNVLQAELLHRSRQQEHPDACVEQALMVTIAGVAAGMRNTG</sequence>
<proteinExistence type="inferred from homology"/>
<feature type="chain" id="PRO_1000061234" description="Phosphoenolpyruvate carboxylase">
    <location>
        <begin position="1"/>
        <end position="878"/>
    </location>
</feature>
<feature type="active site" evidence="1">
    <location>
        <position position="137"/>
    </location>
</feature>
<feature type="active site" evidence="1">
    <location>
        <position position="545"/>
    </location>
</feature>